<sequence>MLIQLICQAPQRAQELEQIAARWQLQASDDSPFALVLSEERLELRKLDEPKLGAIYVDWVEGAVAHRRKFGGGKGQSIAKAAGLNKGVTPVVLDATAGLGRDAFVLASLGCRVQMVERHPVVAALLEDGLQRAKQDDEIGAWVSERISLLHASSHDALQQLASDPNFTSPDVVYLDPMYPHPENKKKTALVKKEMRVFQSLVGADNDADALLEPALQLAQKRVVVKRPDYAPWLGNRKPSMAMETKKNRFDVYVIAAMSGE</sequence>
<reference key="1">
    <citation type="journal article" date="2000" name="Nature">
        <title>DNA sequence of both chromosomes of the cholera pathogen Vibrio cholerae.</title>
        <authorList>
            <person name="Heidelberg J.F."/>
            <person name="Eisen J.A."/>
            <person name="Nelson W.C."/>
            <person name="Clayton R.A."/>
            <person name="Gwinn M.L."/>
            <person name="Dodson R.J."/>
            <person name="Haft D.H."/>
            <person name="Hickey E.K."/>
            <person name="Peterson J.D."/>
            <person name="Umayam L.A."/>
            <person name="Gill S.R."/>
            <person name="Nelson K.E."/>
            <person name="Read T.D."/>
            <person name="Tettelin H."/>
            <person name="Richardson D.L."/>
            <person name="Ermolaeva M.D."/>
            <person name="Vamathevan J.J."/>
            <person name="Bass S."/>
            <person name="Qin H."/>
            <person name="Dragoi I."/>
            <person name="Sellers P."/>
            <person name="McDonald L.A."/>
            <person name="Utterback T.R."/>
            <person name="Fleischmann R.D."/>
            <person name="Nierman W.C."/>
            <person name="White O."/>
            <person name="Salzberg S.L."/>
            <person name="Smith H.O."/>
            <person name="Colwell R.R."/>
            <person name="Mekalanos J.J."/>
            <person name="Venter J.C."/>
            <person name="Fraser C.M."/>
        </authorList>
    </citation>
    <scope>NUCLEOTIDE SEQUENCE [LARGE SCALE GENOMIC DNA]</scope>
    <source>
        <strain>ATCC 39315 / El Tor Inaba N16961</strain>
    </source>
</reference>
<feature type="chain" id="PRO_0000212094" description="Ribosomal RNA small subunit methyltransferase J">
    <location>
        <begin position="1"/>
        <end position="261"/>
    </location>
</feature>
<feature type="binding site" evidence="1">
    <location>
        <begin position="101"/>
        <end position="102"/>
    </location>
    <ligand>
        <name>S-adenosyl-L-methionine</name>
        <dbReference type="ChEBI" id="CHEBI:59789"/>
    </ligand>
</feature>
<feature type="binding site" evidence="1">
    <location>
        <begin position="117"/>
        <end position="118"/>
    </location>
    <ligand>
        <name>S-adenosyl-L-methionine</name>
        <dbReference type="ChEBI" id="CHEBI:59789"/>
    </ligand>
</feature>
<feature type="binding site" evidence="1">
    <location>
        <begin position="153"/>
        <end position="154"/>
    </location>
    <ligand>
        <name>S-adenosyl-L-methionine</name>
        <dbReference type="ChEBI" id="CHEBI:59789"/>
    </ligand>
</feature>
<feature type="binding site" evidence="1">
    <location>
        <position position="176"/>
    </location>
    <ligand>
        <name>S-adenosyl-L-methionine</name>
        <dbReference type="ChEBI" id="CHEBI:59789"/>
    </ligand>
</feature>
<keyword id="KW-0963">Cytoplasm</keyword>
<keyword id="KW-0489">Methyltransferase</keyword>
<keyword id="KW-1185">Reference proteome</keyword>
<keyword id="KW-0698">rRNA processing</keyword>
<keyword id="KW-0949">S-adenosyl-L-methionine</keyword>
<keyword id="KW-0808">Transferase</keyword>
<name>RSMJ_VIBCH</name>
<dbReference type="EC" id="2.1.1.242" evidence="1"/>
<dbReference type="EMBL" id="AE003852">
    <property type="protein sequence ID" value="AAF93251.1"/>
    <property type="status" value="ALT_INIT"/>
    <property type="molecule type" value="Genomic_DNA"/>
</dbReference>
<dbReference type="PIR" id="A82368">
    <property type="entry name" value="A82368"/>
</dbReference>
<dbReference type="RefSeq" id="NP_229732.2">
    <property type="nucleotide sequence ID" value="NC_002505.1"/>
</dbReference>
<dbReference type="RefSeq" id="WP_000908213.1">
    <property type="nucleotide sequence ID" value="NZ_LT906614.1"/>
</dbReference>
<dbReference type="SMR" id="Q9KVR6"/>
<dbReference type="STRING" id="243277.VC_0073"/>
<dbReference type="DNASU" id="2614881"/>
<dbReference type="EnsemblBacteria" id="AAF93251">
    <property type="protein sequence ID" value="AAF93251"/>
    <property type="gene ID" value="VC_0073"/>
</dbReference>
<dbReference type="KEGG" id="vch:VC_0073"/>
<dbReference type="PATRIC" id="fig|243277.26.peg.71"/>
<dbReference type="eggNOG" id="COG0742">
    <property type="taxonomic scope" value="Bacteria"/>
</dbReference>
<dbReference type="HOGENOM" id="CLU_076324_0_0_6"/>
<dbReference type="Proteomes" id="UP000000584">
    <property type="component" value="Chromosome 1"/>
</dbReference>
<dbReference type="GO" id="GO:0005737">
    <property type="term" value="C:cytoplasm"/>
    <property type="evidence" value="ECO:0007669"/>
    <property type="project" value="UniProtKB-SubCell"/>
</dbReference>
<dbReference type="GO" id="GO:0036308">
    <property type="term" value="F:16S rRNA (guanine(1516)-N(2))-methyltransferase activity"/>
    <property type="evidence" value="ECO:0000318"/>
    <property type="project" value="GO_Central"/>
</dbReference>
<dbReference type="GO" id="GO:0070475">
    <property type="term" value="P:rRNA base methylation"/>
    <property type="evidence" value="ECO:0000318"/>
    <property type="project" value="GO_Central"/>
</dbReference>
<dbReference type="CDD" id="cd02440">
    <property type="entry name" value="AdoMet_MTases"/>
    <property type="match status" value="1"/>
</dbReference>
<dbReference type="Gene3D" id="3.40.50.150">
    <property type="entry name" value="Vaccinia Virus protein VP39"/>
    <property type="match status" value="1"/>
</dbReference>
<dbReference type="Gene3D" id="3.40.1630.10">
    <property type="entry name" value="YhiQ-like domain"/>
    <property type="match status" value="1"/>
</dbReference>
<dbReference type="HAMAP" id="MF_01523">
    <property type="entry name" value="16SrRNA_methyltr_J"/>
    <property type="match status" value="1"/>
</dbReference>
<dbReference type="InterPro" id="IPR007536">
    <property type="entry name" value="16SrRNA_methylTrfase_J"/>
</dbReference>
<dbReference type="InterPro" id="IPR029063">
    <property type="entry name" value="SAM-dependent_MTases_sf"/>
</dbReference>
<dbReference type="PANTHER" id="PTHR36112">
    <property type="entry name" value="RIBOSOMAL RNA SMALL SUBUNIT METHYLTRANSFERASE J"/>
    <property type="match status" value="1"/>
</dbReference>
<dbReference type="PANTHER" id="PTHR36112:SF1">
    <property type="entry name" value="RIBOSOMAL RNA SMALL SUBUNIT METHYLTRANSFERASE J"/>
    <property type="match status" value="1"/>
</dbReference>
<dbReference type="Pfam" id="PF04445">
    <property type="entry name" value="SAM_MT"/>
    <property type="match status" value="1"/>
</dbReference>
<dbReference type="SUPFAM" id="SSF53335">
    <property type="entry name" value="S-adenosyl-L-methionine-dependent methyltransferases"/>
    <property type="match status" value="1"/>
</dbReference>
<gene>
    <name evidence="1" type="primary">rsmJ</name>
    <name type="ordered locus">VC_0073</name>
</gene>
<proteinExistence type="inferred from homology"/>
<evidence type="ECO:0000255" key="1">
    <source>
        <dbReference type="HAMAP-Rule" id="MF_01523"/>
    </source>
</evidence>
<evidence type="ECO:0000305" key="2"/>
<accession>Q9KVR6</accession>
<comment type="function">
    <text evidence="1">Specifically methylates the guanosine in position 1516 of 16S rRNA.</text>
</comment>
<comment type="catalytic activity">
    <reaction evidence="1">
        <text>guanosine(1516) in 16S rRNA + S-adenosyl-L-methionine = N(2)-methylguanosine(1516) in 16S rRNA + S-adenosyl-L-homocysteine + H(+)</text>
        <dbReference type="Rhea" id="RHEA:43220"/>
        <dbReference type="Rhea" id="RHEA-COMP:10412"/>
        <dbReference type="Rhea" id="RHEA-COMP:10413"/>
        <dbReference type="ChEBI" id="CHEBI:15378"/>
        <dbReference type="ChEBI" id="CHEBI:57856"/>
        <dbReference type="ChEBI" id="CHEBI:59789"/>
        <dbReference type="ChEBI" id="CHEBI:74269"/>
        <dbReference type="ChEBI" id="CHEBI:74481"/>
        <dbReference type="EC" id="2.1.1.242"/>
    </reaction>
</comment>
<comment type="subcellular location">
    <subcellularLocation>
        <location evidence="1">Cytoplasm</location>
    </subcellularLocation>
</comment>
<comment type="similarity">
    <text evidence="1">Belongs to the methyltransferase superfamily. RsmJ family.</text>
</comment>
<comment type="sequence caution" evidence="2">
    <conflict type="erroneous initiation">
        <sequence resource="EMBL-CDS" id="AAF93251"/>
    </conflict>
    <text>Extended N-terminus.</text>
</comment>
<organism>
    <name type="scientific">Vibrio cholerae serotype O1 (strain ATCC 39315 / El Tor Inaba N16961)</name>
    <dbReference type="NCBI Taxonomy" id="243277"/>
    <lineage>
        <taxon>Bacteria</taxon>
        <taxon>Pseudomonadati</taxon>
        <taxon>Pseudomonadota</taxon>
        <taxon>Gammaproteobacteria</taxon>
        <taxon>Vibrionales</taxon>
        <taxon>Vibrionaceae</taxon>
        <taxon>Vibrio</taxon>
    </lineage>
</organism>
<protein>
    <recommendedName>
        <fullName evidence="1">Ribosomal RNA small subunit methyltransferase J</fullName>
        <ecNumber evidence="1">2.1.1.242</ecNumber>
    </recommendedName>
    <alternativeName>
        <fullName evidence="1">16S rRNA m2G1516 methyltransferase</fullName>
    </alternativeName>
    <alternativeName>
        <fullName evidence="1">rRNA (guanine-N(2)-)-methyltransferase</fullName>
    </alternativeName>
</protein>